<gene>
    <name type="primary">pts1</name>
    <name type="ORF">SPAC4A8.13c</name>
</gene>
<keyword id="KW-0963">Cytoplasm</keyword>
<keyword id="KW-0378">Hydrolase</keyword>
<keyword id="KW-0539">Nucleus</keyword>
<keyword id="KW-0645">Protease</keyword>
<keyword id="KW-0647">Proteasome</keyword>
<keyword id="KW-1185">Reference proteome</keyword>
<keyword id="KW-0888">Threonine protease</keyword>
<keyword id="KW-0865">Zymogen</keyword>
<reference key="1">
    <citation type="submission" date="1992-08" db="EMBL/GenBank/DDBJ databases">
        <authorList>
            <person name="Stone E.M."/>
            <person name="Tanaka K."/>
            <person name="Ichihara A."/>
            <person name="Yanagida M."/>
        </authorList>
    </citation>
    <scope>NUCLEOTIDE SEQUENCE [GENOMIC DNA]</scope>
</reference>
<reference key="2">
    <citation type="journal article" date="2002" name="Nature">
        <title>The genome sequence of Schizosaccharomyces pombe.</title>
        <authorList>
            <person name="Wood V."/>
            <person name="Gwilliam R."/>
            <person name="Rajandream M.A."/>
            <person name="Lyne M.H."/>
            <person name="Lyne R."/>
            <person name="Stewart A."/>
            <person name="Sgouros J.G."/>
            <person name="Peat N."/>
            <person name="Hayles J."/>
            <person name="Baker S.G."/>
            <person name="Basham D."/>
            <person name="Bowman S."/>
            <person name="Brooks K."/>
            <person name="Brown D."/>
            <person name="Brown S."/>
            <person name="Chillingworth T."/>
            <person name="Churcher C.M."/>
            <person name="Collins M."/>
            <person name="Connor R."/>
            <person name="Cronin A."/>
            <person name="Davis P."/>
            <person name="Feltwell T."/>
            <person name="Fraser A."/>
            <person name="Gentles S."/>
            <person name="Goble A."/>
            <person name="Hamlin N."/>
            <person name="Harris D.E."/>
            <person name="Hidalgo J."/>
            <person name="Hodgson G."/>
            <person name="Holroyd S."/>
            <person name="Hornsby T."/>
            <person name="Howarth S."/>
            <person name="Huckle E.J."/>
            <person name="Hunt S."/>
            <person name="Jagels K."/>
            <person name="James K.D."/>
            <person name="Jones L."/>
            <person name="Jones M."/>
            <person name="Leather S."/>
            <person name="McDonald S."/>
            <person name="McLean J."/>
            <person name="Mooney P."/>
            <person name="Moule S."/>
            <person name="Mungall K.L."/>
            <person name="Murphy L.D."/>
            <person name="Niblett D."/>
            <person name="Odell C."/>
            <person name="Oliver K."/>
            <person name="O'Neil S."/>
            <person name="Pearson D."/>
            <person name="Quail M.A."/>
            <person name="Rabbinowitsch E."/>
            <person name="Rutherford K.M."/>
            <person name="Rutter S."/>
            <person name="Saunders D."/>
            <person name="Seeger K."/>
            <person name="Sharp S."/>
            <person name="Skelton J."/>
            <person name="Simmonds M.N."/>
            <person name="Squares R."/>
            <person name="Squares S."/>
            <person name="Stevens K."/>
            <person name="Taylor K."/>
            <person name="Taylor R.G."/>
            <person name="Tivey A."/>
            <person name="Walsh S.V."/>
            <person name="Warren T."/>
            <person name="Whitehead S."/>
            <person name="Woodward J.R."/>
            <person name="Volckaert G."/>
            <person name="Aert R."/>
            <person name="Robben J."/>
            <person name="Grymonprez B."/>
            <person name="Weltjens I."/>
            <person name="Vanstreels E."/>
            <person name="Rieger M."/>
            <person name="Schaefer M."/>
            <person name="Mueller-Auer S."/>
            <person name="Gabel C."/>
            <person name="Fuchs M."/>
            <person name="Duesterhoeft A."/>
            <person name="Fritzc C."/>
            <person name="Holzer E."/>
            <person name="Moestl D."/>
            <person name="Hilbert H."/>
            <person name="Borzym K."/>
            <person name="Langer I."/>
            <person name="Beck A."/>
            <person name="Lehrach H."/>
            <person name="Reinhardt R."/>
            <person name="Pohl T.M."/>
            <person name="Eger P."/>
            <person name="Zimmermann W."/>
            <person name="Wedler H."/>
            <person name="Wambutt R."/>
            <person name="Purnelle B."/>
            <person name="Goffeau A."/>
            <person name="Cadieu E."/>
            <person name="Dreano S."/>
            <person name="Gloux S."/>
            <person name="Lelaure V."/>
            <person name="Mottier S."/>
            <person name="Galibert F."/>
            <person name="Aves S.J."/>
            <person name="Xiang Z."/>
            <person name="Hunt C."/>
            <person name="Moore K."/>
            <person name="Hurst S.M."/>
            <person name="Lucas M."/>
            <person name="Rochet M."/>
            <person name="Gaillardin C."/>
            <person name="Tallada V.A."/>
            <person name="Garzon A."/>
            <person name="Thode G."/>
            <person name="Daga R.R."/>
            <person name="Cruzado L."/>
            <person name="Jimenez J."/>
            <person name="Sanchez M."/>
            <person name="del Rey F."/>
            <person name="Benito J."/>
            <person name="Dominguez A."/>
            <person name="Revuelta J.L."/>
            <person name="Moreno S."/>
            <person name="Armstrong J."/>
            <person name="Forsburg S.L."/>
            <person name="Cerutti L."/>
            <person name="Lowe T."/>
            <person name="McCombie W.R."/>
            <person name="Paulsen I."/>
            <person name="Potashkin J."/>
            <person name="Shpakovski G.V."/>
            <person name="Ussery D."/>
            <person name="Barrell B.G."/>
            <person name="Nurse P."/>
        </authorList>
    </citation>
    <scope>NUCLEOTIDE SEQUENCE [LARGE SCALE GENOMIC DNA]</scope>
    <source>
        <strain>972 / ATCC 24843</strain>
    </source>
</reference>
<reference key="3">
    <citation type="submission" date="1995-01" db="EMBL/GenBank/DDBJ databases">
        <authorList>
            <person name="Hilti N."/>
        </authorList>
    </citation>
    <scope>NUCLEOTIDE SEQUENCE [GENOMIC DNA] OF 1-204</scope>
    <source>
        <strain>972 / ATCC 24843</strain>
    </source>
</reference>
<reference key="4">
    <citation type="journal article" date="2006" name="Nat. Biotechnol.">
        <title>ORFeome cloning and global analysis of protein localization in the fission yeast Schizosaccharomyces pombe.</title>
        <authorList>
            <person name="Matsuyama A."/>
            <person name="Arai R."/>
            <person name="Yashiroda Y."/>
            <person name="Shirai A."/>
            <person name="Kamata A."/>
            <person name="Sekido S."/>
            <person name="Kobayashi Y."/>
            <person name="Hashimoto A."/>
            <person name="Hamamoto M."/>
            <person name="Hiraoka Y."/>
            <person name="Horinouchi S."/>
            <person name="Yoshida M."/>
        </authorList>
    </citation>
    <scope>SUBCELLULAR LOCATION [LARGE SCALE ANALYSIS]</scope>
</reference>
<proteinExistence type="inferred from homology"/>
<organism>
    <name type="scientific">Schizosaccharomyces pombe (strain 972 / ATCC 24843)</name>
    <name type="common">Fission yeast</name>
    <dbReference type="NCBI Taxonomy" id="284812"/>
    <lineage>
        <taxon>Eukaryota</taxon>
        <taxon>Fungi</taxon>
        <taxon>Dikarya</taxon>
        <taxon>Ascomycota</taxon>
        <taxon>Taphrinomycotina</taxon>
        <taxon>Schizosaccharomycetes</taxon>
        <taxon>Schizosaccharomycetales</taxon>
        <taxon>Schizosaccharomycetaceae</taxon>
        <taxon>Schizosaccharomyces</taxon>
    </lineage>
</organism>
<feature type="propeptide" id="PRO_0000026609" description="Removed in mature form" evidence="1">
    <location>
        <begin position="1"/>
        <end position="61"/>
    </location>
</feature>
<feature type="chain" id="PRO_0000026610" description="Probable proteasome subunit beta type-5">
    <location>
        <begin position="62"/>
        <end position="272"/>
    </location>
</feature>
<feature type="active site" description="Nucleophile" evidence="1">
    <location>
        <position position="62"/>
    </location>
</feature>
<comment type="function">
    <text>The proteasome is a multicatalytic proteinase complex which is characterized by its ability to cleave peptides with Arg, Phe, Tyr, Leu, and Glu adjacent to the leaving group at neutral or slightly basic pH. The proteasome has an ATP-dependent proteolytic activity.</text>
</comment>
<comment type="catalytic activity">
    <reaction>
        <text>Cleavage of peptide bonds with very broad specificity.</text>
        <dbReference type="EC" id="3.4.25.1"/>
    </reaction>
</comment>
<comment type="subunit">
    <text evidence="1">The 26S proteasome consists of a 20S proteasome core and two 19S regulatory subunits. The 20S proteasome core is composed of 28 subunits that are arranged in four stacked rings, resulting in a barrel-shaped structure. The two end rings are each formed by seven alpha subunits, and the two central rings are each formed by seven beta subunits. The catalytic chamber with the active sites is on the inside of the barrel (By similarity).</text>
</comment>
<comment type="subcellular location">
    <subcellularLocation>
        <location evidence="2 3">Cytoplasm</location>
    </subcellularLocation>
    <subcellularLocation>
        <location evidence="3">Nucleus</location>
    </subcellularLocation>
</comment>
<comment type="similarity">
    <text evidence="2">Belongs to the peptidase T1B family.</text>
</comment>
<comment type="sequence caution" evidence="4">
    <conflict type="erroneous initiation">
        <sequence resource="EMBL-CDS" id="CAA58746"/>
    </conflict>
</comment>
<name>PSB5_SCHPO</name>
<protein>
    <recommendedName>
        <fullName>Probable proteasome subunit beta type-5</fullName>
        <ecNumber>3.4.25.1</ecNumber>
    </recommendedName>
    <alternativeName>
        <fullName>Macropain subunit pts1</fullName>
    </alternativeName>
    <alternativeName>
        <fullName>Multicatalytic endopeptidase complex subunit pts1</fullName>
    </alternativeName>
    <alternativeName>
        <fullName>Proteasome component pts1</fullName>
    </alternativeName>
</protein>
<dbReference type="EC" id="3.4.25.1"/>
<dbReference type="EMBL" id="D13094">
    <property type="protein sequence ID" value="BAA02403.1"/>
    <property type="molecule type" value="Genomic_DNA"/>
</dbReference>
<dbReference type="EMBL" id="CU329670">
    <property type="protein sequence ID" value="CAB11483.1"/>
    <property type="molecule type" value="Genomic_DNA"/>
</dbReference>
<dbReference type="EMBL" id="X83866">
    <property type="protein sequence ID" value="CAA58746.1"/>
    <property type="status" value="ALT_INIT"/>
    <property type="molecule type" value="Genomic_DNA"/>
</dbReference>
<dbReference type="PIR" id="JS0753">
    <property type="entry name" value="JS0753"/>
</dbReference>
<dbReference type="PIR" id="T38783">
    <property type="entry name" value="T38783"/>
</dbReference>
<dbReference type="RefSeq" id="NP_593825.1">
    <property type="nucleotide sequence ID" value="NM_001019254.2"/>
</dbReference>
<dbReference type="SMR" id="P30655"/>
<dbReference type="BioGRID" id="280037">
    <property type="interactions" value="8"/>
</dbReference>
<dbReference type="ComplexPortal" id="CPX-9077">
    <property type="entry name" value="26S proteasome complex"/>
</dbReference>
<dbReference type="FunCoup" id="P30655">
    <property type="interactions" value="219"/>
</dbReference>
<dbReference type="STRING" id="284812.P30655"/>
<dbReference type="MEROPS" id="T01.012"/>
<dbReference type="iPTMnet" id="P30655"/>
<dbReference type="PaxDb" id="4896-SPAC4A8.13c.1"/>
<dbReference type="EnsemblFungi" id="SPAC4A8.13c.1">
    <property type="protein sequence ID" value="SPAC4A8.13c.1:pep"/>
    <property type="gene ID" value="SPAC4A8.13c"/>
</dbReference>
<dbReference type="GeneID" id="2543623"/>
<dbReference type="KEGG" id="spo:2543623"/>
<dbReference type="PomBase" id="SPAC4A8.13c">
    <property type="gene designation" value="pts1"/>
</dbReference>
<dbReference type="VEuPathDB" id="FungiDB:SPAC4A8.13c"/>
<dbReference type="eggNOG" id="KOG0175">
    <property type="taxonomic scope" value="Eukaryota"/>
</dbReference>
<dbReference type="HOGENOM" id="CLU_035750_7_1_1"/>
<dbReference type="InParanoid" id="P30655"/>
<dbReference type="OMA" id="NLGMAMQ"/>
<dbReference type="PhylomeDB" id="P30655"/>
<dbReference type="Reactome" id="R-SPO-1236978">
    <property type="pathway name" value="Cross-presentation of soluble exogenous antigens (endosomes)"/>
</dbReference>
<dbReference type="Reactome" id="R-SPO-350562">
    <property type="pathway name" value="Regulation of ornithine decarboxylase (ODC)"/>
</dbReference>
<dbReference type="Reactome" id="R-SPO-5687128">
    <property type="pathway name" value="MAPK6/MAPK4 signaling"/>
</dbReference>
<dbReference type="Reactome" id="R-SPO-5689603">
    <property type="pathway name" value="UCH proteinases"/>
</dbReference>
<dbReference type="Reactome" id="R-SPO-5689880">
    <property type="pathway name" value="Ub-specific processing proteases"/>
</dbReference>
<dbReference type="Reactome" id="R-SPO-68949">
    <property type="pathway name" value="Orc1 removal from chromatin"/>
</dbReference>
<dbReference type="Reactome" id="R-SPO-69017">
    <property type="pathway name" value="CDK-mediated phosphorylation and removal of Cdc6"/>
</dbReference>
<dbReference type="Reactome" id="R-SPO-69601">
    <property type="pathway name" value="Ubiquitin Mediated Degradation of Phosphorylated Cdc25A"/>
</dbReference>
<dbReference type="Reactome" id="R-SPO-75815">
    <property type="pathway name" value="Ubiquitin-dependent degradation of Cyclin D"/>
</dbReference>
<dbReference type="Reactome" id="R-SPO-8854050">
    <property type="pathway name" value="FBXL7 down-regulates AURKA during mitotic entry and in early mitosis"/>
</dbReference>
<dbReference type="Reactome" id="R-SPO-8948751">
    <property type="pathway name" value="Regulation of PTEN stability and activity"/>
</dbReference>
<dbReference type="Reactome" id="R-SPO-8951664">
    <property type="pathway name" value="Neddylation"/>
</dbReference>
<dbReference type="Reactome" id="R-SPO-9755511">
    <property type="pathway name" value="KEAP1-NFE2L2 pathway"/>
</dbReference>
<dbReference type="Reactome" id="R-SPO-983168">
    <property type="pathway name" value="Antigen processing: Ubiquitination &amp; Proteasome degradation"/>
</dbReference>
<dbReference type="Reactome" id="R-SPO-9907900">
    <property type="pathway name" value="Proteasome assembly"/>
</dbReference>
<dbReference type="PRO" id="PR:P30655"/>
<dbReference type="Proteomes" id="UP000002485">
    <property type="component" value="Chromosome I"/>
</dbReference>
<dbReference type="GO" id="GO:0005829">
    <property type="term" value="C:cytosol"/>
    <property type="evidence" value="ECO:0007005"/>
    <property type="project" value="PomBase"/>
</dbReference>
<dbReference type="GO" id="GO:0005635">
    <property type="term" value="C:nuclear envelope"/>
    <property type="evidence" value="ECO:0007005"/>
    <property type="project" value="PomBase"/>
</dbReference>
<dbReference type="GO" id="GO:0005634">
    <property type="term" value="C:nucleus"/>
    <property type="evidence" value="ECO:0007005"/>
    <property type="project" value="PomBase"/>
</dbReference>
<dbReference type="GO" id="GO:0019774">
    <property type="term" value="C:proteasome core complex, beta-subunit complex"/>
    <property type="evidence" value="ECO:0000314"/>
    <property type="project" value="PomBase"/>
</dbReference>
<dbReference type="GO" id="GO:0004175">
    <property type="term" value="F:endopeptidase activity"/>
    <property type="evidence" value="ECO:0000318"/>
    <property type="project" value="GO_Central"/>
</dbReference>
<dbReference type="GO" id="GO:0004298">
    <property type="term" value="F:threonine-type endopeptidase activity"/>
    <property type="evidence" value="ECO:0007669"/>
    <property type="project" value="UniProtKB-KW"/>
</dbReference>
<dbReference type="GO" id="GO:0043161">
    <property type="term" value="P:proteasome-mediated ubiquitin-dependent protein catabolic process"/>
    <property type="evidence" value="ECO:0000318"/>
    <property type="project" value="GO_Central"/>
</dbReference>
<dbReference type="CDD" id="cd03761">
    <property type="entry name" value="proteasome_beta_type_5"/>
    <property type="match status" value="1"/>
</dbReference>
<dbReference type="FunFam" id="3.60.20.10:FF:000013">
    <property type="entry name" value="Proteasome subunit beta type-5"/>
    <property type="match status" value="1"/>
</dbReference>
<dbReference type="Gene3D" id="3.60.20.10">
    <property type="entry name" value="Glutamine Phosphoribosylpyrophosphate, subunit 1, domain 1"/>
    <property type="match status" value="1"/>
</dbReference>
<dbReference type="InterPro" id="IPR029055">
    <property type="entry name" value="Ntn_hydrolases_N"/>
</dbReference>
<dbReference type="InterPro" id="IPR000243">
    <property type="entry name" value="Pept_T1A_subB"/>
</dbReference>
<dbReference type="InterPro" id="IPR016050">
    <property type="entry name" value="Proteasome_bsu_CS"/>
</dbReference>
<dbReference type="InterPro" id="IPR001353">
    <property type="entry name" value="Proteasome_sua/b"/>
</dbReference>
<dbReference type="InterPro" id="IPR023333">
    <property type="entry name" value="Proteasome_suB-type"/>
</dbReference>
<dbReference type="PANTHER" id="PTHR32194">
    <property type="entry name" value="METALLOPROTEASE TLDD"/>
    <property type="match status" value="1"/>
</dbReference>
<dbReference type="PANTHER" id="PTHR32194:SF3">
    <property type="entry name" value="PROTEASOME SUBUNIT BETA"/>
    <property type="match status" value="1"/>
</dbReference>
<dbReference type="Pfam" id="PF00227">
    <property type="entry name" value="Proteasome"/>
    <property type="match status" value="1"/>
</dbReference>
<dbReference type="PRINTS" id="PR00141">
    <property type="entry name" value="PROTEASOME"/>
</dbReference>
<dbReference type="SUPFAM" id="SSF56235">
    <property type="entry name" value="N-terminal nucleophile aminohydrolases (Ntn hydrolases)"/>
    <property type="match status" value="1"/>
</dbReference>
<dbReference type="PROSITE" id="PS00854">
    <property type="entry name" value="PROTEASOME_BETA_1"/>
    <property type="match status" value="1"/>
</dbReference>
<dbReference type="PROSITE" id="PS51476">
    <property type="entry name" value="PROTEASOME_BETA_2"/>
    <property type="match status" value="1"/>
</dbReference>
<evidence type="ECO:0000250" key="1"/>
<evidence type="ECO:0000255" key="2">
    <source>
        <dbReference type="PROSITE-ProRule" id="PRU00809"/>
    </source>
</evidence>
<evidence type="ECO:0000269" key="3">
    <source>
    </source>
</evidence>
<evidence type="ECO:0000305" key="4"/>
<sequence length="272" mass="29987">MNSIVSKYTQSTNNDDPKKIIEEEGFTNRFDVVPVPQSSLYLRNLTDETKNKHCLIKMNHGTTTLAFRYQHGIVVCVDSRASAGPLIASQTVKKVIEINPYLLGTLAGGAADCQFWETVLGMECRLHQLRNKELISVSAASKILSNITYSYKGYGLSMGTMLAGTGKGGTALYYIDSDGTRLKGDLFSVGSGSTFAYGVLDSGYRWDLSKQEALYLAQRSIVAATHRDAYSGGSVNLYHIDENGWVFHGNFDVDSLIWEAKDNENSFAHIPR</sequence>
<accession>P30655</accession>